<reference key="1">
    <citation type="journal article" date="1999" name="Nat. Genet.">
        <title>Comparative genomes of Chlamydia pneumoniae and C. trachomatis.</title>
        <authorList>
            <person name="Kalman S."/>
            <person name="Mitchell W.P."/>
            <person name="Marathe R."/>
            <person name="Lammel C.J."/>
            <person name="Fan J."/>
            <person name="Hyman R.W."/>
            <person name="Olinger L."/>
            <person name="Grimwood J."/>
            <person name="Davis R.W."/>
            <person name="Stephens R.S."/>
        </authorList>
    </citation>
    <scope>NUCLEOTIDE SEQUENCE [LARGE SCALE GENOMIC DNA]</scope>
    <source>
        <strain>CWL029</strain>
    </source>
</reference>
<reference key="2">
    <citation type="journal article" date="2000" name="Nucleic Acids Res.">
        <title>Genome sequences of Chlamydia trachomatis MoPn and Chlamydia pneumoniae AR39.</title>
        <authorList>
            <person name="Read T.D."/>
            <person name="Brunham R.C."/>
            <person name="Shen C."/>
            <person name="Gill S.R."/>
            <person name="Heidelberg J.F."/>
            <person name="White O."/>
            <person name="Hickey E.K."/>
            <person name="Peterson J.D."/>
            <person name="Utterback T.R."/>
            <person name="Berry K.J."/>
            <person name="Bass S."/>
            <person name="Linher K.D."/>
            <person name="Weidman J.F."/>
            <person name="Khouri H.M."/>
            <person name="Craven B."/>
            <person name="Bowman C."/>
            <person name="Dodson R.J."/>
            <person name="Gwinn M.L."/>
            <person name="Nelson W.C."/>
            <person name="DeBoy R.T."/>
            <person name="Kolonay J.F."/>
            <person name="McClarty G."/>
            <person name="Salzberg S.L."/>
            <person name="Eisen J.A."/>
            <person name="Fraser C.M."/>
        </authorList>
    </citation>
    <scope>NUCLEOTIDE SEQUENCE [LARGE SCALE GENOMIC DNA]</scope>
    <source>
        <strain>AR39</strain>
    </source>
</reference>
<reference key="3">
    <citation type="journal article" date="2000" name="Nucleic Acids Res.">
        <title>Comparison of whole genome sequences of Chlamydia pneumoniae J138 from Japan and CWL029 from USA.</title>
        <authorList>
            <person name="Shirai M."/>
            <person name="Hirakawa H."/>
            <person name="Kimoto M."/>
            <person name="Tabuchi M."/>
            <person name="Kishi F."/>
            <person name="Ouchi K."/>
            <person name="Shiba T."/>
            <person name="Ishii K."/>
            <person name="Hattori M."/>
            <person name="Kuhara S."/>
            <person name="Nakazawa T."/>
        </authorList>
    </citation>
    <scope>NUCLEOTIDE SEQUENCE [LARGE SCALE GENOMIC DNA]</scope>
    <source>
        <strain>J138</strain>
    </source>
</reference>
<reference key="4">
    <citation type="submission" date="2002-05" db="EMBL/GenBank/DDBJ databases">
        <title>The genome sequence of Chlamydia pneumoniae TW183 and comparison with other Chlamydia strains based on whole genome sequence analysis.</title>
        <authorList>
            <person name="Geng M.M."/>
            <person name="Schuhmacher A."/>
            <person name="Muehldorfer I."/>
            <person name="Bensch K.W."/>
            <person name="Schaefer K.P."/>
            <person name="Schneider S."/>
            <person name="Pohl T."/>
            <person name="Essig A."/>
            <person name="Marre R."/>
            <person name="Melchers K."/>
        </authorList>
    </citation>
    <scope>NUCLEOTIDE SEQUENCE [LARGE SCALE GENOMIC DNA]</scope>
    <source>
        <strain>TW-183</strain>
    </source>
</reference>
<accession>Q9Z7M4</accession>
<accession>Q9JQL4</accession>
<accession>Q9JSC3</accession>
<feature type="chain" id="PRO_0000080796" description="Putative phosphate permease CPn_0680/CP_0067/CPj0680/CpB0707">
    <location>
        <begin position="1"/>
        <end position="426"/>
    </location>
</feature>
<feature type="transmembrane region" description="Helical" evidence="1">
    <location>
        <begin position="1"/>
        <end position="21"/>
    </location>
</feature>
<feature type="transmembrane region" description="Helical" evidence="1">
    <location>
        <begin position="42"/>
        <end position="62"/>
    </location>
</feature>
<feature type="transmembrane region" description="Helical" evidence="1">
    <location>
        <begin position="87"/>
        <end position="107"/>
    </location>
</feature>
<feature type="transmembrane region" description="Helical" evidence="1">
    <location>
        <begin position="112"/>
        <end position="132"/>
    </location>
</feature>
<feature type="transmembrane region" description="Helical" evidence="1">
    <location>
        <begin position="137"/>
        <end position="157"/>
    </location>
</feature>
<feature type="transmembrane region" description="Helical" evidence="1">
    <location>
        <begin position="180"/>
        <end position="200"/>
    </location>
</feature>
<feature type="transmembrane region" description="Helical" evidence="1">
    <location>
        <begin position="207"/>
        <end position="227"/>
    </location>
</feature>
<feature type="transmembrane region" description="Helical" evidence="1">
    <location>
        <begin position="260"/>
        <end position="280"/>
    </location>
</feature>
<feature type="transmembrane region" description="Helical" evidence="1">
    <location>
        <begin position="313"/>
        <end position="333"/>
    </location>
</feature>
<feature type="transmembrane region" description="Helical" evidence="1">
    <location>
        <begin position="364"/>
        <end position="384"/>
    </location>
</feature>
<feature type="transmembrane region" description="Helical" evidence="1">
    <location>
        <begin position="399"/>
        <end position="419"/>
    </location>
</feature>
<feature type="sequence conflict" description="In Ref. 3; BAA98887." evidence="2" ref="3">
    <original>W</original>
    <variation>V</variation>
    <location>
        <position position="105"/>
    </location>
</feature>
<feature type="sequence conflict" description="In Ref. 3; BAA98887." evidence="2" ref="3">
    <original>L</original>
    <variation>S</variation>
    <location>
        <position position="321"/>
    </location>
</feature>
<evidence type="ECO:0000255" key="1"/>
<evidence type="ECO:0000305" key="2"/>
<keyword id="KW-1003">Cell membrane</keyword>
<keyword id="KW-0472">Membrane</keyword>
<keyword id="KW-0592">Phosphate transport</keyword>
<keyword id="KW-0812">Transmembrane</keyword>
<keyword id="KW-1133">Transmembrane helix</keyword>
<keyword id="KW-0813">Transport</keyword>
<gene>
    <name type="ordered locus">CPn_0680</name>
    <name type="ordered locus">CP_0067</name>
    <name type="ordered locus">CPj0680</name>
    <name type="ordered locus">CpB0707</name>
</gene>
<sequence length="426" mass="45560">MLPLIIFVLLCGFYTSWNIGANDVANAVGPSVGSGVLTLRQAVVIAAIFEFFGALLLGDRVAGTIESSIVSVTNPMIASGDYMYGMTAALLATGVWLQLASFFGWPVSTTHSIVGAVIGFGLVLGKGTIIYWNSVGIILISWILSPFMGGCVAYLIFSFIRRHIFYKNDPVLAMVRVAPFLAALVIMTLGTVMISGGVILKVSSTPWAVSGVLVCGLLSYIITFYYVHTKHCSYISDTPKKGSLTYRLKERGGNYGRKYLVVERIFAYLQIIVACFMAFAHGSNDVANAIAPVAGVLRQAYPASYTSYTLIRLMAFGGIGLVIGLAIWGWRVIETVGCKITELTPSRGFSVGMGSALTIALASILGLPISTTHVVVGAVLGIGLARGIRAINLNIIKDIVLSWFITLPAGALLSILFFFALRALFH</sequence>
<protein>
    <recommendedName>
        <fullName>Putative phosphate permease CPn_0680/CP_0067/CPj0680/CpB0707</fullName>
    </recommendedName>
</protein>
<dbReference type="EMBL" id="AE001363">
    <property type="protein sequence ID" value="AAD18819.1"/>
    <property type="molecule type" value="Genomic_DNA"/>
</dbReference>
<dbReference type="EMBL" id="AE002161">
    <property type="protein sequence ID" value="AAF73624.1"/>
    <property type="molecule type" value="Genomic_DNA"/>
</dbReference>
<dbReference type="EMBL" id="BA000008">
    <property type="protein sequence ID" value="BAA98887.1"/>
    <property type="molecule type" value="Genomic_DNA"/>
</dbReference>
<dbReference type="EMBL" id="AE009440">
    <property type="protein sequence ID" value="AAP98636.1"/>
    <property type="molecule type" value="Genomic_DNA"/>
</dbReference>
<dbReference type="PIR" id="D72049">
    <property type="entry name" value="D72049"/>
</dbReference>
<dbReference type="PIR" id="E86575">
    <property type="entry name" value="E86575"/>
</dbReference>
<dbReference type="RefSeq" id="NP_224876.1">
    <property type="nucleotide sequence ID" value="NC_000922.1"/>
</dbReference>
<dbReference type="RefSeq" id="WP_010883318.1">
    <property type="nucleotide sequence ID" value="NZ_LN847257.1"/>
</dbReference>
<dbReference type="SMR" id="Q9Z7M4"/>
<dbReference type="STRING" id="406984.CPK_ORF00081"/>
<dbReference type="GeneID" id="45050731"/>
<dbReference type="KEGG" id="cpa:CP_0067"/>
<dbReference type="KEGG" id="cpj:ygo4"/>
<dbReference type="KEGG" id="cpn:CPn_0680"/>
<dbReference type="KEGG" id="cpt:CpB0707"/>
<dbReference type="PATRIC" id="fig|115713.3.peg.751"/>
<dbReference type="eggNOG" id="COG0306">
    <property type="taxonomic scope" value="Bacteria"/>
</dbReference>
<dbReference type="HOGENOM" id="CLU_015355_3_3_0"/>
<dbReference type="OrthoDB" id="19855at2"/>
<dbReference type="Proteomes" id="UP000000583">
    <property type="component" value="Chromosome"/>
</dbReference>
<dbReference type="Proteomes" id="UP000000801">
    <property type="component" value="Chromosome"/>
</dbReference>
<dbReference type="GO" id="GO:0005886">
    <property type="term" value="C:plasma membrane"/>
    <property type="evidence" value="ECO:0007669"/>
    <property type="project" value="UniProtKB-SubCell"/>
</dbReference>
<dbReference type="GO" id="GO:0005315">
    <property type="term" value="F:phosphate transmembrane transporter activity"/>
    <property type="evidence" value="ECO:0007669"/>
    <property type="project" value="InterPro"/>
</dbReference>
<dbReference type="GO" id="GO:0035435">
    <property type="term" value="P:phosphate ion transmembrane transport"/>
    <property type="evidence" value="ECO:0007669"/>
    <property type="project" value="TreeGrafter"/>
</dbReference>
<dbReference type="InterPro" id="IPR001204">
    <property type="entry name" value="Phos_transporter"/>
</dbReference>
<dbReference type="PANTHER" id="PTHR11101">
    <property type="entry name" value="PHOSPHATE TRANSPORTER"/>
    <property type="match status" value="1"/>
</dbReference>
<dbReference type="PANTHER" id="PTHR11101:SF80">
    <property type="entry name" value="PHOSPHATE TRANSPORTER"/>
    <property type="match status" value="1"/>
</dbReference>
<dbReference type="Pfam" id="PF01384">
    <property type="entry name" value="PHO4"/>
    <property type="match status" value="1"/>
</dbReference>
<name>Y680_CHLPN</name>
<organism>
    <name type="scientific">Chlamydia pneumoniae</name>
    <name type="common">Chlamydophila pneumoniae</name>
    <dbReference type="NCBI Taxonomy" id="83558"/>
    <lineage>
        <taxon>Bacteria</taxon>
        <taxon>Pseudomonadati</taxon>
        <taxon>Chlamydiota</taxon>
        <taxon>Chlamydiia</taxon>
        <taxon>Chlamydiales</taxon>
        <taxon>Chlamydiaceae</taxon>
        <taxon>Chlamydia/Chlamydophila group</taxon>
        <taxon>Chlamydia</taxon>
    </lineage>
</organism>
<proteinExistence type="inferred from homology"/>
<comment type="function">
    <text>Potential transporter for phosphate.</text>
</comment>
<comment type="subcellular location">
    <subcellularLocation>
        <location evidence="2">Cell membrane</location>
        <topology evidence="2">Multi-pass membrane protein</topology>
    </subcellularLocation>
</comment>
<comment type="similarity">
    <text evidence="2">Belongs to the inorganic phosphate transporter (PiT) (TC 2.A.20) family.</text>
</comment>